<comment type="function">
    <text evidence="1">Catalyzes the condensation of the acetyl group of acetyl-CoA with 3-methyl-2-oxobutanoate (2-ketoisovalerate) to form 3-carboxy-3-hydroxy-4-methylpentanoate (2-isopropylmalate).</text>
</comment>
<comment type="catalytic activity">
    <reaction evidence="1">
        <text>3-methyl-2-oxobutanoate + acetyl-CoA + H2O = (2S)-2-isopropylmalate + CoA + H(+)</text>
        <dbReference type="Rhea" id="RHEA:21524"/>
        <dbReference type="ChEBI" id="CHEBI:1178"/>
        <dbReference type="ChEBI" id="CHEBI:11851"/>
        <dbReference type="ChEBI" id="CHEBI:15377"/>
        <dbReference type="ChEBI" id="CHEBI:15378"/>
        <dbReference type="ChEBI" id="CHEBI:57287"/>
        <dbReference type="ChEBI" id="CHEBI:57288"/>
        <dbReference type="EC" id="2.3.3.13"/>
    </reaction>
</comment>
<comment type="cofactor">
    <cofactor evidence="1">
        <name>Mg(2+)</name>
        <dbReference type="ChEBI" id="CHEBI:18420"/>
    </cofactor>
</comment>
<comment type="pathway">
    <text evidence="1">Amino-acid biosynthesis; L-leucine biosynthesis; L-leucine from 3-methyl-2-oxobutanoate: step 1/4.</text>
</comment>
<comment type="subunit">
    <text evidence="1">Homodimer.</text>
</comment>
<comment type="subcellular location">
    <subcellularLocation>
        <location evidence="1">Cytoplasm</location>
    </subcellularLocation>
</comment>
<comment type="similarity">
    <text evidence="1">Belongs to the alpha-IPM synthase/homocitrate synthase family. LeuA type 2 subfamily.</text>
</comment>
<name>LEU1_MYCLE</name>
<keyword id="KW-0028">Amino-acid biosynthesis</keyword>
<keyword id="KW-0100">Branched-chain amino acid biosynthesis</keyword>
<keyword id="KW-0963">Cytoplasm</keyword>
<keyword id="KW-0432">Leucine biosynthesis</keyword>
<keyword id="KW-0460">Magnesium</keyword>
<keyword id="KW-0479">Metal-binding</keyword>
<keyword id="KW-1185">Reference proteome</keyword>
<keyword id="KW-0808">Transferase</keyword>
<organism>
    <name type="scientific">Mycobacterium leprae (strain TN)</name>
    <dbReference type="NCBI Taxonomy" id="272631"/>
    <lineage>
        <taxon>Bacteria</taxon>
        <taxon>Bacillati</taxon>
        <taxon>Actinomycetota</taxon>
        <taxon>Actinomycetes</taxon>
        <taxon>Mycobacteriales</taxon>
        <taxon>Mycobacteriaceae</taxon>
        <taxon>Mycobacterium</taxon>
    </lineage>
</organism>
<proteinExistence type="inferred from homology"/>
<protein>
    <recommendedName>
        <fullName evidence="1">2-isopropylmalate synthase</fullName>
        <ecNumber evidence="1">2.3.3.13</ecNumber>
    </recommendedName>
    <alternativeName>
        <fullName evidence="1">Alpha-IPM synthase</fullName>
    </alternativeName>
    <alternativeName>
        <fullName evidence="1">Alpha-isopropylmalate synthase</fullName>
    </alternativeName>
</protein>
<dbReference type="EC" id="2.3.3.13" evidence="1"/>
<dbReference type="EMBL" id="AL023596">
    <property type="protein sequence ID" value="CAA19166.1"/>
    <property type="molecule type" value="Genomic_DNA"/>
</dbReference>
<dbReference type="EMBL" id="AL583925">
    <property type="protein sequence ID" value="CAC31840.1"/>
    <property type="molecule type" value="Genomic_DNA"/>
</dbReference>
<dbReference type="PIR" id="H87199">
    <property type="entry name" value="H87199"/>
</dbReference>
<dbReference type="SMR" id="Q9CB76"/>
<dbReference type="STRING" id="272631.gene:17576185"/>
<dbReference type="KEGG" id="mle:ML2324"/>
<dbReference type="Leproma" id="ML2324"/>
<dbReference type="eggNOG" id="COG0119">
    <property type="taxonomic scope" value="Bacteria"/>
</dbReference>
<dbReference type="HOGENOM" id="CLU_004588_3_2_11"/>
<dbReference type="UniPathway" id="UPA00048">
    <property type="reaction ID" value="UER00070"/>
</dbReference>
<dbReference type="Proteomes" id="UP000000806">
    <property type="component" value="Chromosome"/>
</dbReference>
<dbReference type="GO" id="GO:0005737">
    <property type="term" value="C:cytoplasm"/>
    <property type="evidence" value="ECO:0007669"/>
    <property type="project" value="UniProtKB-SubCell"/>
</dbReference>
<dbReference type="GO" id="GO:0003852">
    <property type="term" value="F:2-isopropylmalate synthase activity"/>
    <property type="evidence" value="ECO:0007669"/>
    <property type="project" value="UniProtKB-UniRule"/>
</dbReference>
<dbReference type="GO" id="GO:0003985">
    <property type="term" value="F:acetyl-CoA C-acetyltransferase activity"/>
    <property type="evidence" value="ECO:0007669"/>
    <property type="project" value="UniProtKB-UniRule"/>
</dbReference>
<dbReference type="GO" id="GO:0000287">
    <property type="term" value="F:magnesium ion binding"/>
    <property type="evidence" value="ECO:0007669"/>
    <property type="project" value="UniProtKB-UniRule"/>
</dbReference>
<dbReference type="GO" id="GO:0009098">
    <property type="term" value="P:L-leucine biosynthetic process"/>
    <property type="evidence" value="ECO:0007669"/>
    <property type="project" value="UniProtKB-UniRule"/>
</dbReference>
<dbReference type="CDD" id="cd07942">
    <property type="entry name" value="DRE_TIM_LeuA"/>
    <property type="match status" value="1"/>
</dbReference>
<dbReference type="FunFam" id="3.20.20.70:FF:000045">
    <property type="entry name" value="2-isopropylmalate synthase"/>
    <property type="match status" value="1"/>
</dbReference>
<dbReference type="FunFam" id="3.30.160.270:FF:000006">
    <property type="entry name" value="2-isopropylmalate synthase"/>
    <property type="match status" value="1"/>
</dbReference>
<dbReference type="Gene3D" id="3.30.160.270">
    <property type="match status" value="1"/>
</dbReference>
<dbReference type="Gene3D" id="3.20.20.70">
    <property type="entry name" value="Aldolase class I"/>
    <property type="match status" value="1"/>
</dbReference>
<dbReference type="HAMAP" id="MF_00572">
    <property type="entry name" value="LeuA_type2"/>
    <property type="match status" value="1"/>
</dbReference>
<dbReference type="InterPro" id="IPR013709">
    <property type="entry name" value="2-isopropylmalate_synth_dimer"/>
</dbReference>
<dbReference type="InterPro" id="IPR002034">
    <property type="entry name" value="AIPM/Hcit_synth_CS"/>
</dbReference>
<dbReference type="InterPro" id="IPR013785">
    <property type="entry name" value="Aldolase_TIM"/>
</dbReference>
<dbReference type="InterPro" id="IPR005668">
    <property type="entry name" value="IPM_Synthase"/>
</dbReference>
<dbReference type="InterPro" id="IPR054692">
    <property type="entry name" value="LeuA-like_post-cat"/>
</dbReference>
<dbReference type="InterPro" id="IPR036230">
    <property type="entry name" value="LeuA_allosteric_dom_sf"/>
</dbReference>
<dbReference type="InterPro" id="IPR039371">
    <property type="entry name" value="LeuA_N_DRE-TIM"/>
</dbReference>
<dbReference type="InterPro" id="IPR000891">
    <property type="entry name" value="PYR_CT"/>
</dbReference>
<dbReference type="NCBIfam" id="TIGR00970">
    <property type="entry name" value="leuA_yeast"/>
    <property type="match status" value="1"/>
</dbReference>
<dbReference type="NCBIfam" id="NF002991">
    <property type="entry name" value="PRK03739.1"/>
    <property type="match status" value="1"/>
</dbReference>
<dbReference type="PANTHER" id="PTHR46911">
    <property type="match status" value="1"/>
</dbReference>
<dbReference type="PANTHER" id="PTHR46911:SF1">
    <property type="entry name" value="2-ISOPROPYLMALATE SYNTHASE"/>
    <property type="match status" value="1"/>
</dbReference>
<dbReference type="Pfam" id="PF00682">
    <property type="entry name" value="HMGL-like"/>
    <property type="match status" value="1"/>
</dbReference>
<dbReference type="Pfam" id="PF22615">
    <property type="entry name" value="IPMS_D2"/>
    <property type="match status" value="1"/>
</dbReference>
<dbReference type="Pfam" id="PF08502">
    <property type="entry name" value="LeuA_dimer"/>
    <property type="match status" value="1"/>
</dbReference>
<dbReference type="SMART" id="SM00917">
    <property type="entry name" value="LeuA_dimer"/>
    <property type="match status" value="1"/>
</dbReference>
<dbReference type="SUPFAM" id="SSF110921">
    <property type="entry name" value="2-isopropylmalate synthase LeuA, allosteric (dimerisation) domain"/>
    <property type="match status" value="1"/>
</dbReference>
<dbReference type="SUPFAM" id="SSF51569">
    <property type="entry name" value="Aldolase"/>
    <property type="match status" value="1"/>
</dbReference>
<dbReference type="SUPFAM" id="SSF89000">
    <property type="entry name" value="post-HMGL domain-like"/>
    <property type="match status" value="1"/>
</dbReference>
<dbReference type="PROSITE" id="PS00815">
    <property type="entry name" value="AIPM_HOMOCIT_SYNTH_1"/>
    <property type="match status" value="1"/>
</dbReference>
<dbReference type="PROSITE" id="PS00816">
    <property type="entry name" value="AIPM_HOMOCIT_SYNTH_2"/>
    <property type="match status" value="1"/>
</dbReference>
<dbReference type="PROSITE" id="PS50991">
    <property type="entry name" value="PYR_CT"/>
    <property type="match status" value="1"/>
</dbReference>
<evidence type="ECO:0000255" key="1">
    <source>
        <dbReference type="HAMAP-Rule" id="MF_00572"/>
    </source>
</evidence>
<evidence type="ECO:0000256" key="2">
    <source>
        <dbReference type="SAM" id="MobiDB-lite"/>
    </source>
</evidence>
<sequence length="607" mass="66898">MASFSESLSQDPADAYKSAPSITKPMGPPSPGQPQWNPQRATSMPVFRYRPFAKEVEPIRLVDRTWPDRVIDCAPLWCAVDLRDGNQALIDPMSPICKRRMFDLLVRMGYKEIEVGFPSASQTDFDFVREIITDGTIPDDVTIQVLTQCRPELIERTFEACENASRVIVHFYNSTSILQRRVVFRADQATVKAIATDGARKCVEEAFKYPGTHWRFEYSPESYTGTELEYAKQVCDAVGEVIQPTPDNPIIFNLPATVEMATPNVYADSIEWMSRNLANRESVILSLHPHNDRGTAVAAAELGYHAGADRIEGCLFGNGERTGNVCLVTLGLNLFSRGVDPQIDFSNIDEIRRTVEYCNKLRVHERHPYGGDLVYTAFSGSHQDAINKGLDQMKIDADAADSDVDDILWQVPYLPIDPRDVGRTYEAVIRVNSQSGKGGVAYIMKADHGLELPRRLQIEFSRAIQKISEGEGGEITPTEMWDVFFEEYLSPVQPLERIKQRVNAAEEDGGSTSIAATVKINGEETEISGVGNGPLAAFIDALGHVGLQVAVLDYSEHAMNAGDDAQAAAYVEASVHGHTAWGVGIAPSITTASLRAVVSAVNRAMPR</sequence>
<accession>Q9CB76</accession>
<accession>O69523</accession>
<gene>
    <name evidence="1" type="primary">leuA</name>
    <name type="ordered locus">ML2324</name>
    <name type="ORF">MLCB2407.26c</name>
</gene>
<reference key="1">
    <citation type="journal article" date="2001" name="Nature">
        <title>Massive gene decay in the leprosy bacillus.</title>
        <authorList>
            <person name="Cole S.T."/>
            <person name="Eiglmeier K."/>
            <person name="Parkhill J."/>
            <person name="James K.D."/>
            <person name="Thomson N.R."/>
            <person name="Wheeler P.R."/>
            <person name="Honore N."/>
            <person name="Garnier T."/>
            <person name="Churcher C.M."/>
            <person name="Harris D.E."/>
            <person name="Mungall K.L."/>
            <person name="Basham D."/>
            <person name="Brown D."/>
            <person name="Chillingworth T."/>
            <person name="Connor R."/>
            <person name="Davies R.M."/>
            <person name="Devlin K."/>
            <person name="Duthoy S."/>
            <person name="Feltwell T."/>
            <person name="Fraser A."/>
            <person name="Hamlin N."/>
            <person name="Holroyd S."/>
            <person name="Hornsby T."/>
            <person name="Jagels K."/>
            <person name="Lacroix C."/>
            <person name="Maclean J."/>
            <person name="Moule S."/>
            <person name="Murphy L.D."/>
            <person name="Oliver K."/>
            <person name="Quail M.A."/>
            <person name="Rajandream M.A."/>
            <person name="Rutherford K.M."/>
            <person name="Rutter S."/>
            <person name="Seeger K."/>
            <person name="Simon S."/>
            <person name="Simmonds M."/>
            <person name="Skelton J."/>
            <person name="Squares R."/>
            <person name="Squares S."/>
            <person name="Stevens K."/>
            <person name="Taylor K."/>
            <person name="Whitehead S."/>
            <person name="Woodward J.R."/>
            <person name="Barrell B.G."/>
        </authorList>
    </citation>
    <scope>NUCLEOTIDE SEQUENCE [LARGE SCALE GENOMIC DNA]</scope>
    <source>
        <strain>TN</strain>
    </source>
</reference>
<feature type="chain" id="PRO_0000140435" description="2-isopropylmalate synthase">
    <location>
        <begin position="1"/>
        <end position="607"/>
    </location>
</feature>
<feature type="domain" description="Pyruvate carboxyltransferase" evidence="1">
    <location>
        <begin position="75"/>
        <end position="349"/>
    </location>
</feature>
<feature type="region of interest" description="Disordered" evidence="2">
    <location>
        <begin position="1"/>
        <end position="40"/>
    </location>
</feature>
<feature type="region of interest" description="Regulatory domain" evidence="1">
    <location>
        <begin position="491"/>
        <end position="607"/>
    </location>
</feature>
<feature type="compositionally biased region" description="Polar residues" evidence="2">
    <location>
        <begin position="1"/>
        <end position="10"/>
    </location>
</feature>
<feature type="binding site" evidence="1">
    <location>
        <position position="84"/>
    </location>
    <ligand>
        <name>Mg(2+)</name>
        <dbReference type="ChEBI" id="CHEBI:18420"/>
    </ligand>
</feature>
<feature type="binding site" evidence="1">
    <location>
        <position position="288"/>
    </location>
    <ligand>
        <name>Mg(2+)</name>
        <dbReference type="ChEBI" id="CHEBI:18420"/>
    </ligand>
</feature>
<feature type="binding site" evidence="1">
    <location>
        <position position="290"/>
    </location>
    <ligand>
        <name>Mg(2+)</name>
        <dbReference type="ChEBI" id="CHEBI:18420"/>
    </ligand>
</feature>
<feature type="binding site" evidence="1">
    <location>
        <position position="324"/>
    </location>
    <ligand>
        <name>Mg(2+)</name>
        <dbReference type="ChEBI" id="CHEBI:18420"/>
    </ligand>
</feature>